<protein>
    <recommendedName>
        <fullName>Zinc finger CCCH domain-containing protein 14</fullName>
    </recommendedName>
</protein>
<dbReference type="EMBL" id="AAFC03026649">
    <property type="status" value="NOT_ANNOTATED_CDS"/>
    <property type="molecule type" value="Genomic_DNA"/>
</dbReference>
<dbReference type="EMBL" id="BC102847">
    <property type="protein sequence ID" value="AAI02848.1"/>
    <property type="molecule type" value="mRNA"/>
</dbReference>
<dbReference type="RefSeq" id="NP_001029578.1">
    <molecule id="Q3ZC82-2"/>
    <property type="nucleotide sequence ID" value="NM_001034406.2"/>
</dbReference>
<dbReference type="RefSeq" id="NP_001159774.1">
    <property type="nucleotide sequence ID" value="NM_001166302.1"/>
</dbReference>
<dbReference type="FunCoup" id="Q3ZC82">
    <property type="interactions" value="3692"/>
</dbReference>
<dbReference type="STRING" id="9913.ENSBTAP00000074037"/>
<dbReference type="iPTMnet" id="Q3ZC82"/>
<dbReference type="PaxDb" id="9913-ENSBTAP00000040586"/>
<dbReference type="Ensembl" id="ENSBTAT00000086942.2">
    <molecule id="Q3ZC82-1"/>
    <property type="protein sequence ID" value="ENSBTAP00000064177.1"/>
    <property type="gene ID" value="ENSBTAG00000030453.5"/>
</dbReference>
<dbReference type="GeneID" id="511473"/>
<dbReference type="KEGG" id="bta:511473"/>
<dbReference type="CTD" id="79882"/>
<dbReference type="VEuPathDB" id="HostDB:ENSBTAG00000030453"/>
<dbReference type="eggNOG" id="KOG3702">
    <property type="taxonomic scope" value="Eukaryota"/>
</dbReference>
<dbReference type="GeneTree" id="ENSGT00440000038430"/>
<dbReference type="InParanoid" id="Q3ZC82"/>
<dbReference type="OMA" id="CPYTHVS"/>
<dbReference type="OrthoDB" id="5589010at2759"/>
<dbReference type="Proteomes" id="UP000009136">
    <property type="component" value="Chromosome 10"/>
</dbReference>
<dbReference type="Bgee" id="ENSBTAG00000030453">
    <property type="expression patterns" value="Expressed in spermatid and 103 other cell types or tissues"/>
</dbReference>
<dbReference type="GO" id="GO:0005737">
    <property type="term" value="C:cytoplasm"/>
    <property type="evidence" value="ECO:0000318"/>
    <property type="project" value="GO_Central"/>
</dbReference>
<dbReference type="GO" id="GO:0016607">
    <property type="term" value="C:nuclear speck"/>
    <property type="evidence" value="ECO:0000250"/>
    <property type="project" value="UniProtKB"/>
</dbReference>
<dbReference type="GO" id="GO:0005634">
    <property type="term" value="C:nucleus"/>
    <property type="evidence" value="ECO:0000250"/>
    <property type="project" value="UniProtKB"/>
</dbReference>
<dbReference type="GO" id="GO:0008143">
    <property type="term" value="F:poly(A) binding"/>
    <property type="evidence" value="ECO:0000250"/>
    <property type="project" value="UniProtKB"/>
</dbReference>
<dbReference type="GO" id="GO:0036002">
    <property type="term" value="F:pre-mRNA binding"/>
    <property type="evidence" value="ECO:0000250"/>
    <property type="project" value="UniProtKB"/>
</dbReference>
<dbReference type="GO" id="GO:0008270">
    <property type="term" value="F:zinc ion binding"/>
    <property type="evidence" value="ECO:0007669"/>
    <property type="project" value="UniProtKB-KW"/>
</dbReference>
<dbReference type="GO" id="GO:0048255">
    <property type="term" value="P:mRNA stabilization"/>
    <property type="evidence" value="ECO:0000250"/>
    <property type="project" value="UniProtKB"/>
</dbReference>
<dbReference type="GO" id="GO:0043488">
    <property type="term" value="P:regulation of mRNA stability"/>
    <property type="evidence" value="ECO:0000318"/>
    <property type="project" value="GO_Central"/>
</dbReference>
<dbReference type="GO" id="GO:0007283">
    <property type="term" value="P:spermatogenesis"/>
    <property type="evidence" value="ECO:0000250"/>
    <property type="project" value="UniProtKB"/>
</dbReference>
<dbReference type="FunFam" id="4.10.1000.30:FF:000001">
    <property type="entry name" value="Zinc finger CCCH domain-containing protein 14"/>
    <property type="match status" value="1"/>
</dbReference>
<dbReference type="FunFam" id="4.10.1000.40:FF:000006">
    <property type="entry name" value="Zinc finger CCCH domain-containing protein 14"/>
    <property type="match status" value="1"/>
</dbReference>
<dbReference type="FunFam" id="1.20.1390.10:FF:000006">
    <property type="entry name" value="zinc finger CCCH domain-containing protein 14"/>
    <property type="match status" value="1"/>
</dbReference>
<dbReference type="FunFam" id="4.10.1000.40:FF:000001">
    <property type="entry name" value="zinc finger CCCH domain-containing protein 14 isoform X2"/>
    <property type="match status" value="1"/>
</dbReference>
<dbReference type="FunFam" id="4.10.1000.30:FF:000003">
    <property type="entry name" value="zinc finger CCCH domain-containing protein 14 isoform X6"/>
    <property type="match status" value="1"/>
</dbReference>
<dbReference type="Gene3D" id="4.10.1000.30">
    <property type="match status" value="1"/>
</dbReference>
<dbReference type="Gene3D" id="4.10.1000.40">
    <property type="match status" value="1"/>
</dbReference>
<dbReference type="Gene3D" id="1.20.1390.10">
    <property type="entry name" value="PWI domain"/>
    <property type="match status" value="1"/>
</dbReference>
<dbReference type="InterPro" id="IPR040366">
    <property type="entry name" value="Nab2/ZC3H14"/>
</dbReference>
<dbReference type="InterPro" id="IPR000571">
    <property type="entry name" value="Znf_CCCH"/>
</dbReference>
<dbReference type="PANTHER" id="PTHR14738">
    <property type="entry name" value="ZINC FINGER CCCH DOMAIN-CONTAINING PROTEIN 14"/>
    <property type="match status" value="1"/>
</dbReference>
<dbReference type="PANTHER" id="PTHR14738:SF29">
    <property type="entry name" value="ZINC FINGER CCCH DOMAIN-CONTAINING PROTEIN 14"/>
    <property type="match status" value="1"/>
</dbReference>
<dbReference type="Pfam" id="PF14608">
    <property type="entry name" value="zf-CCCH_2"/>
    <property type="match status" value="5"/>
</dbReference>
<dbReference type="SMART" id="SM00356">
    <property type="entry name" value="ZnF_C3H1"/>
    <property type="match status" value="3"/>
</dbReference>
<dbReference type="PROSITE" id="PS50103">
    <property type="entry name" value="ZF_C3H1"/>
    <property type="match status" value="3"/>
</dbReference>
<sequence>MEIGTEISRKIRSAIKGKLQELGAYVDEELPDYIMVMVANKKSQDQMTEDLSLFLGNNTIRFTVWLHGVLDKLRSVTTDPASLKSSDTNLFDGNVPSNKSSFSRGDERRHEAAVPPLAVSSTRPEKRESRVSTSSQEQKATNVRQTYDDGAATRLMSTVKPLRELAPSEDVIDIKPEPDDLIDEDLNFVQENPLSQKKTTVTLTYGSSRPSIEIYRPPATRNTDSGAHLNRLQFQQQQNSIHAAKQLDIQSSRVYETGRLCEPEVLNSLEETYSPFFRSNAEKMSIEEENFRKRKLPVVSSVVKVKKFSHDGEEEEEDDDCGSRTGSISSSVSVPAKPERRPSLPPSKQANKNLILKAISEAQESVTKTTNYSTVSQKQTLPVAPRTRTSQEDLLAEVAQGHGRVPRISSPVKEEEAQGGSVDERQGTQQRQLLSRLQIDPVMAETLQISQDYYDMESMVHADTRSFILKKPKLCEELVVAASQASGMETADALQARSGHLVQTRDLVQPDKPASPKFIVTLDGVPSPPGYMSDQEEDMCSEGMRPAQHPAASHGGLAGLLHPQRSRVLSRQLEDPDGSFANAEMSELSVAQKPEKLLERCKYWPACKNGDECAYHHPVSPCKAFPNCKFAEKCLFVHPNCKYDAKCTKPDCPFTHMSRRTPGLPPKPVTAPAPPSSSQLCRYFPACKKMECPFYHPKHCRFNTQCTRPDCAFYHPTITVPPRHALKWIRPQTSD</sequence>
<comment type="function">
    <text evidence="1">RNA-binding protein involved in the biogenesis of circular RNAs (circRNAs), which are produced by back-splicing circularization of pre-mRNAs. Acts by binding to both exon-intron boundary and 3'-UTR of pre-mRNAs to promote circRNA biogenesis through dimerization and the association with the spliceosome. Required for spermatogenesis via involvement in circRNA biogenesis. Regulates the pre-mRNA processing of ATP5MC1; preventing its degradation. Also binds the poly(A) tail of mRNAs; controlling poly(A) length in neuronal cells.</text>
</comment>
<comment type="subunit">
    <text evidence="1">Homodimer; facilitating circular RNAs (circRNAs) formation. Associates with the spliceosome. Interacts with HOOK2. Interacts with ZFC3H1 in a RNase-sensitive manner.</text>
</comment>
<comment type="subcellular location">
    <subcellularLocation>
        <location evidence="1">Nucleus speckle</location>
    </subcellularLocation>
    <text evidence="2">Colocalizes with poly(A) RNA in nuclear speckles.</text>
</comment>
<comment type="alternative products">
    <event type="alternative splicing"/>
    <isoform>
        <id>Q3ZC82-1</id>
        <name>1</name>
        <sequence type="displayed"/>
    </isoform>
    <isoform>
        <id>Q3ZC82-2</id>
        <name>2</name>
        <sequence type="described" ref="VSP_033161"/>
    </isoform>
</comment>
<comment type="similarity">
    <text evidence="7">Belongs to the ZC3H14 family.</text>
</comment>
<organism>
    <name type="scientific">Bos taurus</name>
    <name type="common">Bovine</name>
    <dbReference type="NCBI Taxonomy" id="9913"/>
    <lineage>
        <taxon>Eukaryota</taxon>
        <taxon>Metazoa</taxon>
        <taxon>Chordata</taxon>
        <taxon>Craniata</taxon>
        <taxon>Vertebrata</taxon>
        <taxon>Euteleostomi</taxon>
        <taxon>Mammalia</taxon>
        <taxon>Eutheria</taxon>
        <taxon>Laurasiatheria</taxon>
        <taxon>Artiodactyla</taxon>
        <taxon>Ruminantia</taxon>
        <taxon>Pecora</taxon>
        <taxon>Bovidae</taxon>
        <taxon>Bovinae</taxon>
        <taxon>Bos</taxon>
    </lineage>
</organism>
<feature type="chain" id="PRO_0000331310" description="Zinc finger CCCH domain-containing protein 14">
    <location>
        <begin position="1"/>
        <end position="735"/>
    </location>
</feature>
<feature type="zinc finger region" description="C3H1-type 1" evidence="4">
    <location>
        <begin position="595"/>
        <end position="620"/>
    </location>
</feature>
<feature type="zinc finger region" description="C3H1-type 2" evidence="4">
    <location>
        <begin position="621"/>
        <end position="640"/>
    </location>
</feature>
<feature type="zinc finger region" description="C3H1-type 3" evidence="4">
    <location>
        <begin position="641"/>
        <end position="656"/>
    </location>
</feature>
<feature type="zinc finger region" description="C3H1-type 4" evidence="4">
    <location>
        <begin position="681"/>
        <end position="698"/>
    </location>
</feature>
<feature type="zinc finger region" description="C3H1-type 5" evidence="4">
    <location>
        <begin position="700"/>
        <end position="718"/>
    </location>
</feature>
<feature type="region of interest" description="Disordered" evidence="5">
    <location>
        <begin position="79"/>
        <end position="141"/>
    </location>
</feature>
<feature type="region of interest" description="Disordered" evidence="5">
    <location>
        <begin position="307"/>
        <end position="351"/>
    </location>
</feature>
<feature type="region of interest" description="Disordered" evidence="5">
    <location>
        <begin position="366"/>
        <end position="388"/>
    </location>
</feature>
<feature type="region of interest" description="Disordered" evidence="5">
    <location>
        <begin position="400"/>
        <end position="430"/>
    </location>
</feature>
<feature type="compositionally biased region" description="Polar residues" evidence="5">
    <location>
        <begin position="79"/>
        <end position="103"/>
    </location>
</feature>
<feature type="compositionally biased region" description="Polar residues" evidence="5">
    <location>
        <begin position="131"/>
        <end position="141"/>
    </location>
</feature>
<feature type="compositionally biased region" description="Polar residues" evidence="5">
    <location>
        <begin position="366"/>
        <end position="380"/>
    </location>
</feature>
<feature type="compositionally biased region" description="Basic and acidic residues" evidence="5">
    <location>
        <begin position="412"/>
        <end position="426"/>
    </location>
</feature>
<feature type="modified residue" description="N-acetylmethionine" evidence="1">
    <location>
        <position position="1"/>
    </location>
</feature>
<feature type="modified residue" description="Phosphoserine" evidence="3">
    <location>
        <position position="85"/>
    </location>
</feature>
<feature type="modified residue" description="Phosphoserine" evidence="1">
    <location>
        <position position="240"/>
    </location>
</feature>
<feature type="modified residue" description="Phosphoserine" evidence="3">
    <location>
        <position position="309"/>
    </location>
</feature>
<feature type="modified residue" description="Phosphoserine" evidence="1">
    <location>
        <position position="327"/>
    </location>
</feature>
<feature type="modified residue" description="Phosphoserine" evidence="1">
    <location>
        <position position="343"/>
    </location>
</feature>
<feature type="modified residue" description="N6-acetyllysine; alternate" evidence="1">
    <location>
        <position position="357"/>
    </location>
</feature>
<feature type="modified residue" description="Phosphoserine" evidence="1">
    <location>
        <position position="390"/>
    </location>
</feature>
<feature type="modified residue" description="Phosphoserine" evidence="1">
    <location>
        <position position="409"/>
    </location>
</feature>
<feature type="modified residue" description="Phosphoserine" evidence="1">
    <location>
        <position position="421"/>
    </location>
</feature>
<feature type="modified residue" description="Phosphoserine" evidence="1">
    <location>
        <position position="498"/>
    </location>
</feature>
<feature type="modified residue" description="Phosphoserine" evidence="1">
    <location>
        <position position="515"/>
    </location>
</feature>
<feature type="modified residue" description="Phosphoserine" evidence="3">
    <location>
        <position position="527"/>
    </location>
</feature>
<feature type="modified residue" description="Phosphoserine" evidence="1">
    <location>
        <position position="620"/>
    </location>
</feature>
<feature type="cross-link" description="Glycyl lysine isopeptide (Lys-Gly) (interchain with G-Cter in SUMO2)" evidence="1">
    <location>
        <position position="99"/>
    </location>
</feature>
<feature type="cross-link" description="Glycyl lysine isopeptide (Lys-Gly) (interchain with G-Cter in SUMO2)" evidence="1">
    <location>
        <position position="139"/>
    </location>
</feature>
<feature type="cross-link" description="Glycyl lysine isopeptide (Lys-Gly) (interchain with G-Cter in SUMO2)" evidence="1">
    <location>
        <position position="175"/>
    </location>
</feature>
<feature type="cross-link" description="Glycyl lysine isopeptide (Lys-Gly) (interchain with G-Cter in SUMO2)" evidence="1">
    <location>
        <position position="198"/>
    </location>
</feature>
<feature type="cross-link" description="Glycyl lysine isopeptide (Lys-Gly) (interchain with G-Cter in SUMO2)" evidence="1">
    <location>
        <position position="245"/>
    </location>
</feature>
<feature type="cross-link" description="Glycyl lysine isopeptide (Lys-Gly) (interchain with G-Cter in SUMO2)" evidence="1">
    <location>
        <position position="283"/>
    </location>
</feature>
<feature type="cross-link" description="Glycyl lysine isopeptide (Lys-Gly) (interchain with G-Cter in SUMO2)" evidence="1">
    <location>
        <position position="295"/>
    </location>
</feature>
<feature type="cross-link" description="Glycyl lysine isopeptide (Lys-Gly) (interchain with G-Cter in SUMO2); alternate" evidence="1">
    <location>
        <position position="357"/>
    </location>
</feature>
<feature type="cross-link" description="Glycyl lysine isopeptide (Lys-Gly) (interchain with G-Cter in SUMO2)" evidence="1">
    <location>
        <position position="378"/>
    </location>
</feature>
<feature type="cross-link" description="Glycyl lysine isopeptide (Lys-Gly) (interchain with G-Cter in SUMO2)" evidence="1">
    <location>
        <position position="413"/>
    </location>
</feature>
<feature type="splice variant" id="VSP_033161" description="In isoform 2." evidence="6">
    <location>
        <begin position="452"/>
        <end position="582"/>
    </location>
</feature>
<name>ZC3HE_BOVIN</name>
<accession>Q3ZC82</accession>
<keyword id="KW-0007">Acetylation</keyword>
<keyword id="KW-0025">Alternative splicing</keyword>
<keyword id="KW-0221">Differentiation</keyword>
<keyword id="KW-1017">Isopeptide bond</keyword>
<keyword id="KW-0479">Metal-binding</keyword>
<keyword id="KW-0539">Nucleus</keyword>
<keyword id="KW-0597">Phosphoprotein</keyword>
<keyword id="KW-1185">Reference proteome</keyword>
<keyword id="KW-0677">Repeat</keyword>
<keyword id="KW-0694">RNA-binding</keyword>
<keyword id="KW-0744">Spermatogenesis</keyword>
<keyword id="KW-0832">Ubl conjugation</keyword>
<keyword id="KW-0862">Zinc</keyword>
<keyword id="KW-0863">Zinc-finger</keyword>
<proteinExistence type="evidence at transcript level"/>
<gene>
    <name type="primary">ZC3H14</name>
</gene>
<reference key="1">
    <citation type="journal article" date="2009" name="Science">
        <title>The genome sequence of taurine cattle: a window to ruminant biology and evolution.</title>
        <authorList>
            <consortium name="The bovine genome sequencing and analysis consortium"/>
        </authorList>
    </citation>
    <scope>NUCLEOTIDE SEQUENCE [LARGE SCALE GENOMIC DNA]</scope>
    <source>
        <strain>Hereford</strain>
    </source>
</reference>
<reference key="2">
    <citation type="submission" date="2005-08" db="EMBL/GenBank/DDBJ databases">
        <authorList>
            <consortium name="NIH - Mammalian Gene Collection (MGC) project"/>
        </authorList>
    </citation>
    <scope>NUCLEOTIDE SEQUENCE [LARGE SCALE MRNA] (ISOFORM 2)</scope>
    <source>
        <strain>Crossbred X Angus</strain>
        <tissue>Ileum</tissue>
    </source>
</reference>
<evidence type="ECO:0000250" key="1">
    <source>
        <dbReference type="UniProtKB" id="Q6PJT7"/>
    </source>
</evidence>
<evidence type="ECO:0000250" key="2">
    <source>
        <dbReference type="UniProtKB" id="Q7TMD5"/>
    </source>
</evidence>
<evidence type="ECO:0000250" key="3">
    <source>
        <dbReference type="UniProtKB" id="Q8BJ05"/>
    </source>
</evidence>
<evidence type="ECO:0000255" key="4">
    <source>
        <dbReference type="PROSITE-ProRule" id="PRU00723"/>
    </source>
</evidence>
<evidence type="ECO:0000256" key="5">
    <source>
        <dbReference type="SAM" id="MobiDB-lite"/>
    </source>
</evidence>
<evidence type="ECO:0000303" key="6">
    <source ref="2"/>
</evidence>
<evidence type="ECO:0000305" key="7"/>